<proteinExistence type="inferred from homology"/>
<protein>
    <recommendedName>
        <fullName evidence="1">Acetaldehyde dehydrogenase</fullName>
        <ecNumber evidence="1">1.2.1.10</ecNumber>
    </recommendedName>
    <alternativeName>
        <fullName evidence="1">Acetaldehyde dehydrogenase [acetylating]</fullName>
    </alternativeName>
</protein>
<sequence>MARKLKAAIIGSGNIGTDLMIKILRHGQNIEMGAMVGIDPASDGLARAARMGVATTHEGVEGLTRLDVFKDIDFVFDATSAGAHVKNDAFLRTLKPGIRMIDLTPAAIGPYCIPVVNGEDHLDALNVNMVTCGGQATIPMVAAVSRVAKVHYGEIVASISSKSAGPGTRANIDEFTETTSKAIEVVGGAAKGKAIIVLNPAEPPLIMRDTVYTLSDFASEDAIAESVERMAADVQAYVPGYRLKQKVQFDRIEASHPINIPGVGPRMSGLKTSIFLEVEGAAHYLPAYAGNLDIMTSAGLRTAEHMATRMLAA</sequence>
<organism>
    <name type="scientific">Burkholderia cepacia</name>
    <name type="common">Pseudomonas cepacia</name>
    <dbReference type="NCBI Taxonomy" id="292"/>
    <lineage>
        <taxon>Bacteria</taxon>
        <taxon>Pseudomonadati</taxon>
        <taxon>Pseudomonadota</taxon>
        <taxon>Betaproteobacteria</taxon>
        <taxon>Burkholderiales</taxon>
        <taxon>Burkholderiaceae</taxon>
        <taxon>Burkholderia</taxon>
        <taxon>Burkholderia cepacia complex</taxon>
    </lineage>
</organism>
<accession>Q2VLC6</accession>
<feature type="chain" id="PRO_0000387629" description="Acetaldehyde dehydrogenase">
    <location>
        <begin position="1"/>
        <end position="313"/>
    </location>
</feature>
<feature type="active site" description="Acyl-thioester intermediate" evidence="1">
    <location>
        <position position="132"/>
    </location>
</feature>
<feature type="binding site" evidence="1">
    <location>
        <begin position="12"/>
        <end position="15"/>
    </location>
    <ligand>
        <name>NAD(+)</name>
        <dbReference type="ChEBI" id="CHEBI:57540"/>
    </ligand>
</feature>
<feature type="binding site" evidence="1">
    <location>
        <begin position="163"/>
        <end position="171"/>
    </location>
    <ligand>
        <name>NAD(+)</name>
        <dbReference type="ChEBI" id="CHEBI:57540"/>
    </ligand>
</feature>
<feature type="binding site" evidence="1">
    <location>
        <position position="291"/>
    </location>
    <ligand>
        <name>NAD(+)</name>
        <dbReference type="ChEBI" id="CHEBI:57540"/>
    </ligand>
</feature>
<reference key="1">
    <citation type="submission" date="2005-04" db="EMBL/GenBank/DDBJ databases">
        <authorList>
            <person name="Sebastianelli A."/>
            <person name="Bruce I.J."/>
        </authorList>
    </citation>
    <scope>NUCLEOTIDE SEQUENCE [GENOMIC DNA]</scope>
    <source>
        <strain>2a</strain>
    </source>
</reference>
<name>ACDH_BURCE</name>
<gene>
    <name type="primary">bphG</name>
</gene>
<evidence type="ECO:0000255" key="1">
    <source>
        <dbReference type="HAMAP-Rule" id="MF_01657"/>
    </source>
</evidence>
<geneLocation type="plasmid">
    <name>pIJB1</name>
</geneLocation>
<dbReference type="EC" id="1.2.1.10" evidence="1"/>
<dbReference type="EMBL" id="DQ065837">
    <property type="protein sequence ID" value="AAZ08174.1"/>
    <property type="molecule type" value="Genomic_DNA"/>
</dbReference>
<dbReference type="SMR" id="Q2VLC6"/>
<dbReference type="GO" id="GO:0008774">
    <property type="term" value="F:acetaldehyde dehydrogenase (acetylating) activity"/>
    <property type="evidence" value="ECO:0007669"/>
    <property type="project" value="UniProtKB-UniRule"/>
</dbReference>
<dbReference type="GO" id="GO:0051287">
    <property type="term" value="F:NAD binding"/>
    <property type="evidence" value="ECO:0007669"/>
    <property type="project" value="UniProtKB-UniRule"/>
</dbReference>
<dbReference type="GO" id="GO:0009056">
    <property type="term" value="P:catabolic process"/>
    <property type="evidence" value="ECO:0007669"/>
    <property type="project" value="UniProtKB-KW"/>
</dbReference>
<dbReference type="CDD" id="cd23933">
    <property type="entry name" value="ALDH_C"/>
    <property type="match status" value="1"/>
</dbReference>
<dbReference type="Gene3D" id="3.30.360.10">
    <property type="entry name" value="Dihydrodipicolinate Reductase, domain 2"/>
    <property type="match status" value="1"/>
</dbReference>
<dbReference type="Gene3D" id="3.40.50.720">
    <property type="entry name" value="NAD(P)-binding Rossmann-like Domain"/>
    <property type="match status" value="1"/>
</dbReference>
<dbReference type="HAMAP" id="MF_01657">
    <property type="entry name" value="Ac_ald_DH_ac"/>
    <property type="match status" value="1"/>
</dbReference>
<dbReference type="InterPro" id="IPR003361">
    <property type="entry name" value="Acetaldehyde_dehydrogenase"/>
</dbReference>
<dbReference type="InterPro" id="IPR015426">
    <property type="entry name" value="Acetylaldehyde_DH_C"/>
</dbReference>
<dbReference type="InterPro" id="IPR036291">
    <property type="entry name" value="NAD(P)-bd_dom_sf"/>
</dbReference>
<dbReference type="InterPro" id="IPR000534">
    <property type="entry name" value="Semialdehyde_DH_NAD-bd"/>
</dbReference>
<dbReference type="NCBIfam" id="TIGR03215">
    <property type="entry name" value="ac_ald_DH_ac"/>
    <property type="match status" value="1"/>
</dbReference>
<dbReference type="NCBIfam" id="NF006157">
    <property type="entry name" value="PRK08300.1"/>
    <property type="match status" value="1"/>
</dbReference>
<dbReference type="Pfam" id="PF09290">
    <property type="entry name" value="AcetDehyd-dimer"/>
    <property type="match status" value="1"/>
</dbReference>
<dbReference type="Pfam" id="PF01118">
    <property type="entry name" value="Semialdhyde_dh"/>
    <property type="match status" value="1"/>
</dbReference>
<dbReference type="PIRSF" id="PIRSF015689">
    <property type="entry name" value="Actaldh_dh_actl"/>
    <property type="match status" value="1"/>
</dbReference>
<dbReference type="SMART" id="SM00859">
    <property type="entry name" value="Semialdhyde_dh"/>
    <property type="match status" value="1"/>
</dbReference>
<dbReference type="SUPFAM" id="SSF55347">
    <property type="entry name" value="Glyceraldehyde-3-phosphate dehydrogenase-like, C-terminal domain"/>
    <property type="match status" value="1"/>
</dbReference>
<dbReference type="SUPFAM" id="SSF51735">
    <property type="entry name" value="NAD(P)-binding Rossmann-fold domains"/>
    <property type="match status" value="1"/>
</dbReference>
<keyword id="KW-0058">Aromatic hydrocarbons catabolism</keyword>
<keyword id="KW-0520">NAD</keyword>
<keyword id="KW-0560">Oxidoreductase</keyword>
<keyword id="KW-0614">Plasmid</keyword>
<comment type="catalytic activity">
    <reaction evidence="1">
        <text>acetaldehyde + NAD(+) + CoA = acetyl-CoA + NADH + H(+)</text>
        <dbReference type="Rhea" id="RHEA:23288"/>
        <dbReference type="ChEBI" id="CHEBI:15343"/>
        <dbReference type="ChEBI" id="CHEBI:15378"/>
        <dbReference type="ChEBI" id="CHEBI:57287"/>
        <dbReference type="ChEBI" id="CHEBI:57288"/>
        <dbReference type="ChEBI" id="CHEBI:57540"/>
        <dbReference type="ChEBI" id="CHEBI:57945"/>
        <dbReference type="EC" id="1.2.1.10"/>
    </reaction>
</comment>
<comment type="similarity">
    <text evidence="1">Belongs to the acetaldehyde dehydrogenase family.</text>
</comment>